<protein>
    <recommendedName>
        <fullName>DNA-directed RNA polymerase subunit beta N-terminal section</fullName>
        <ecNumber>2.7.7.6</ecNumber>
    </recommendedName>
    <alternativeName>
        <fullName>PEP</fullName>
    </alternativeName>
    <alternativeName>
        <fullName>Plastid-encoded RNA polymerase subunit beta N-terminal section</fullName>
        <shortName>RNA polymerase subunit beta N-terminal section</shortName>
    </alternativeName>
</protein>
<reference key="1">
    <citation type="journal article" date="2006" name="BMC Evol. Biol.">
        <title>The complete chloroplast genome sequence of the chlorophycean green alga Scenedesmus obliquus reveals a compact gene organization and a biased distribution of genes on the two DNA strands.</title>
        <authorList>
            <person name="de Cambiaire J.-C."/>
            <person name="Otis C."/>
            <person name="Lemieux C."/>
            <person name="Turmel M."/>
        </authorList>
    </citation>
    <scope>NUCLEOTIDE SEQUENCE [LARGE SCALE GENOMIC DNA]</scope>
    <source>
        <strain>UTEX 393</strain>
    </source>
</reference>
<evidence type="ECO:0000250" key="1"/>
<evidence type="ECO:0000305" key="2"/>
<proteinExistence type="inferred from homology"/>
<keyword id="KW-0150">Chloroplast</keyword>
<keyword id="KW-0240">DNA-directed RNA polymerase</keyword>
<keyword id="KW-0548">Nucleotidyltransferase</keyword>
<keyword id="KW-0934">Plastid</keyword>
<keyword id="KW-0804">Transcription</keyword>
<keyword id="KW-0808">Transferase</keyword>
<gene>
    <name type="primary">rpoB1</name>
    <name type="synonym">rpoBa</name>
</gene>
<accession>Q1KVX4</accession>
<geneLocation type="chloroplast"/>
<name>RPOB1_TETOB</name>
<comment type="function">
    <text evidence="1">DNA-dependent RNA polymerase catalyzes the transcription of DNA into RNA using the four ribonucleoside triphosphates as substrates.</text>
</comment>
<comment type="catalytic activity">
    <reaction>
        <text>RNA(n) + a ribonucleoside 5'-triphosphate = RNA(n+1) + diphosphate</text>
        <dbReference type="Rhea" id="RHEA:21248"/>
        <dbReference type="Rhea" id="RHEA-COMP:14527"/>
        <dbReference type="Rhea" id="RHEA-COMP:17342"/>
        <dbReference type="ChEBI" id="CHEBI:33019"/>
        <dbReference type="ChEBI" id="CHEBI:61557"/>
        <dbReference type="ChEBI" id="CHEBI:140395"/>
        <dbReference type="EC" id="2.7.7.6"/>
    </reaction>
</comment>
<comment type="subunit">
    <text evidence="1">In plastids the minimal PEP RNA polymerase catalytic core is composed of four subunits: alpha, beta, beta', and beta''. When a (nuclear-encoded) sigma factor is associated with the core the holoenzyme is formed, which can initiate transcription (By similarity).</text>
</comment>
<comment type="subcellular location">
    <subcellularLocation>
        <location>Plastid</location>
        <location>Chloroplast</location>
    </subcellularLocation>
</comment>
<comment type="miscellaneous">
    <text>In S.obliquus the gene for this protein is split in two.</text>
</comment>
<comment type="similarity">
    <text evidence="2">Belongs to the RNA polymerase beta chain family.</text>
</comment>
<sequence>MYNSNSYIPDLVEIQRQGFFYLLEKGIIEEISKRNPITCFEKQIEIFFYPQYYRLTKPFYSIQQAIFYKKSYVSKFYIPVQLTDRKTKRIFLKWILLAHFPLMTNRGHFLLNGSARVIINQLVRSPGIYFRENMHEIFSNKWSEKPSTTFRRFYADIICLKGTWLRIECDKDFSMWAKMKKGPKIPLLWFLLGMGLSEKYILNSVYKPMNLLQSFTKEMEKMQKSKSSKELKYPYISSTKQAWEQIQKLFKLKKTLRKFSFLKKNEEKPKTFIFGQSSTKIEAKVVFSDFAAFNNSVKRENTVFASNDDTFLVQTSFETKKKKNTRKKENFQKNKTQKTTKLSLQNKEKRVASKLEAYELGRKWFANKFMNPRTYDLGKQGRWLINKKLGLTIPLEQTTLTALDVLTATDSLMKIEDGFFEIDDIDHLKNKRVRTAGEALQEIFSIGLIRLEKSIRLKLNGNGQQSFFQKTSFFNFDSLMSTRPINGAFREFFGTHPLSQFMDQINPLAEITHKRRLSSLGPGGVSRDTATLAIRGIHPSHYGRICPIETPEGKNTGLVNSITTYSKISFHGYLESPFYKVYKGQVQRNLGVFYLSPDKDDHFQTATPDLNLTPLGFLPKKPIPVRIGKRFVRMKTHKLALMGVSPLQMISVATSFIPFLEHDDANRALMGSNMQRQAVPLIRPERPLIGTGLEARVVSDSGHAILAKTSGYIVYSSGSKIYLYTI</sequence>
<organism>
    <name type="scientific">Tetradesmus obliquus</name>
    <name type="common">Green alga</name>
    <name type="synonym">Acutodesmus obliquus</name>
    <dbReference type="NCBI Taxonomy" id="3088"/>
    <lineage>
        <taxon>Eukaryota</taxon>
        <taxon>Viridiplantae</taxon>
        <taxon>Chlorophyta</taxon>
        <taxon>core chlorophytes</taxon>
        <taxon>Chlorophyceae</taxon>
        <taxon>CS clade</taxon>
        <taxon>Sphaeropleales</taxon>
        <taxon>Scenedesmaceae</taxon>
        <taxon>Tetradesmus</taxon>
    </lineage>
</organism>
<feature type="chain" id="PRO_0000308259" description="DNA-directed RNA polymerase subunit beta N-terminal section">
    <location>
        <begin position="1"/>
        <end position="726"/>
    </location>
</feature>
<dbReference type="EC" id="2.7.7.6"/>
<dbReference type="EMBL" id="DQ396875">
    <property type="protein sequence ID" value="ABD48232.1"/>
    <property type="molecule type" value="Genomic_DNA"/>
</dbReference>
<dbReference type="RefSeq" id="YP_635950.1">
    <property type="nucleotide sequence ID" value="NC_008101.1"/>
</dbReference>
<dbReference type="SMR" id="Q1KVX4"/>
<dbReference type="GeneID" id="4099817"/>
<dbReference type="GO" id="GO:0009507">
    <property type="term" value="C:chloroplast"/>
    <property type="evidence" value="ECO:0007669"/>
    <property type="project" value="UniProtKB-SubCell"/>
</dbReference>
<dbReference type="GO" id="GO:0000428">
    <property type="term" value="C:DNA-directed RNA polymerase complex"/>
    <property type="evidence" value="ECO:0007669"/>
    <property type="project" value="UniProtKB-KW"/>
</dbReference>
<dbReference type="GO" id="GO:0005739">
    <property type="term" value="C:mitochondrion"/>
    <property type="evidence" value="ECO:0007669"/>
    <property type="project" value="GOC"/>
</dbReference>
<dbReference type="GO" id="GO:0003677">
    <property type="term" value="F:DNA binding"/>
    <property type="evidence" value="ECO:0007669"/>
    <property type="project" value="InterPro"/>
</dbReference>
<dbReference type="GO" id="GO:0003899">
    <property type="term" value="F:DNA-directed RNA polymerase activity"/>
    <property type="evidence" value="ECO:0007669"/>
    <property type="project" value="UniProtKB-EC"/>
</dbReference>
<dbReference type="GO" id="GO:0032549">
    <property type="term" value="F:ribonucleoside binding"/>
    <property type="evidence" value="ECO:0007669"/>
    <property type="project" value="InterPro"/>
</dbReference>
<dbReference type="GO" id="GO:0006351">
    <property type="term" value="P:DNA-templated transcription"/>
    <property type="evidence" value="ECO:0007669"/>
    <property type="project" value="InterPro"/>
</dbReference>
<dbReference type="Gene3D" id="3.90.1100.10">
    <property type="match status" value="2"/>
</dbReference>
<dbReference type="Gene3D" id="3.90.1110.10">
    <property type="entry name" value="RNA polymerase Rpb2, domain 2"/>
    <property type="match status" value="1"/>
</dbReference>
<dbReference type="InterPro" id="IPR015712">
    <property type="entry name" value="DNA-dir_RNA_pol_su2"/>
</dbReference>
<dbReference type="InterPro" id="IPR007642">
    <property type="entry name" value="RNA_pol_Rpb2_2"/>
</dbReference>
<dbReference type="InterPro" id="IPR037034">
    <property type="entry name" value="RNA_pol_Rpb2_2_sf"/>
</dbReference>
<dbReference type="InterPro" id="IPR007645">
    <property type="entry name" value="RNA_pol_Rpb2_3"/>
</dbReference>
<dbReference type="PANTHER" id="PTHR20856">
    <property type="entry name" value="DNA-DIRECTED RNA POLYMERASE I SUBUNIT 2"/>
    <property type="match status" value="1"/>
</dbReference>
<dbReference type="Pfam" id="PF04561">
    <property type="entry name" value="RNA_pol_Rpb2_2"/>
    <property type="match status" value="2"/>
</dbReference>
<dbReference type="Pfam" id="PF04565">
    <property type="entry name" value="RNA_pol_Rpb2_3"/>
    <property type="match status" value="1"/>
</dbReference>
<dbReference type="SUPFAM" id="SSF64484">
    <property type="entry name" value="beta and beta-prime subunits of DNA dependent RNA-polymerase"/>
    <property type="match status" value="1"/>
</dbReference>